<sequence length="660" mass="70965">MRPRAVLLLLFVLLPMLPAPPAGQPSGRRRGRRSGGAGGGFWGDRVDSQPFALPYIHPTNPFAADVVSQPGAGTRPRQPPRPLGSAWRDQSQRPSAAPRRRSAPAGAAPLTAVSPAPDTAPVPDVDSRGAILRRQYNLSTSPLTSSVASGTNLVLYAAPLNPLLPLQDGTNTHIMATEASNYAQYRVVRATIRYRPLVPNAVGGYAISISFWPQTTTTPTSVDMNSITSTDVRILVQPGIASELVIPSERLHYRNQGWRSVETTGVAEEEATSGLVMLCIHGSPVNSYTNTPYTGALGLLDFALELEFRNLTPGNTNTRVSRYTSTARHRLRRGADGTAELTTTAATRFMKDLHFAGTNGVGEVGRGIALTLFNLADTLLGGLPTELISSAGGQLFYSRPVVSANGEPTVKLYTSVENAQQDKGITIPHDIDLGDSRVVIQDYDNQHEQDRPTPSPAPSRPFSVLRANDVLWLSLTAAEYDQTTYGSSTNPMYVSDTVTLVNVATGAQAVARSLDWSKVTLDGRPLTTIQQYSKTFYVLPLRGKLSFWEAGTTKAGYPYNYNTTASDQILIENAAGHRVAISTYTTSLGAGPTSISAVGVLAPHSALAVLEDTIDYPARAHTFDDFCPECRTLGLQGCAFQSTIAELQRLKMKVGKTRES</sequence>
<dbReference type="EMBL" id="DQ079627">
    <property type="protein sequence ID" value="AAZ30922.1"/>
    <property type="molecule type" value="Genomic_RNA"/>
</dbReference>
<dbReference type="EMBL" id="AF060669">
    <property type="protein sequence ID" value="AAD15816.1"/>
    <property type="molecule type" value="Genomic_DNA"/>
</dbReference>
<dbReference type="PDB" id="2ZTN">
    <property type="method" value="X-ray"/>
    <property type="resolution" value="3.56 A"/>
    <property type="chains" value="A=129-606"/>
</dbReference>
<dbReference type="PDBsum" id="2ZTN"/>
<dbReference type="SMR" id="Q9YLQ9"/>
<dbReference type="DIP" id="DIP-48926N"/>
<dbReference type="EvolutionaryTrace" id="Q9YLQ9"/>
<dbReference type="Proteomes" id="UP000007247">
    <property type="component" value="Genome"/>
</dbReference>
<dbReference type="GO" id="GO:0005576">
    <property type="term" value="C:extracellular region"/>
    <property type="evidence" value="ECO:0007669"/>
    <property type="project" value="UniProtKB-SubCell"/>
</dbReference>
<dbReference type="GO" id="GO:0044165">
    <property type="term" value="C:host cell endoplasmic reticulum"/>
    <property type="evidence" value="ECO:0007669"/>
    <property type="project" value="UniProtKB-SubCell"/>
</dbReference>
<dbReference type="GO" id="GO:0044177">
    <property type="term" value="C:host cell Golgi apparatus"/>
    <property type="evidence" value="ECO:0007669"/>
    <property type="project" value="UniProtKB-SubCell"/>
</dbReference>
<dbReference type="GO" id="GO:0042025">
    <property type="term" value="C:host cell nucleus"/>
    <property type="evidence" value="ECO:0007669"/>
    <property type="project" value="UniProtKB-SubCell"/>
</dbReference>
<dbReference type="GO" id="GO:0044228">
    <property type="term" value="C:host cell surface"/>
    <property type="evidence" value="ECO:0007669"/>
    <property type="project" value="UniProtKB-SubCell"/>
</dbReference>
<dbReference type="GO" id="GO:0039615">
    <property type="term" value="C:T=1 icosahedral viral capsid"/>
    <property type="evidence" value="ECO:0007669"/>
    <property type="project" value="UniProtKB-KW"/>
</dbReference>
<dbReference type="GO" id="GO:0003723">
    <property type="term" value="F:RNA binding"/>
    <property type="evidence" value="ECO:0007669"/>
    <property type="project" value="UniProtKB-KW"/>
</dbReference>
<dbReference type="GO" id="GO:0005198">
    <property type="term" value="F:structural molecule activity"/>
    <property type="evidence" value="ECO:0007669"/>
    <property type="project" value="InterPro"/>
</dbReference>
<dbReference type="FunFam" id="2.40.30.190:FF:000001">
    <property type="entry name" value="Secreted protein ORF2"/>
    <property type="match status" value="1"/>
</dbReference>
<dbReference type="FunFam" id="2.60.120.20:FF:000010">
    <property type="entry name" value="Secreted protein ORF2"/>
    <property type="match status" value="1"/>
</dbReference>
<dbReference type="Gene3D" id="2.40.30.190">
    <property type="match status" value="1"/>
</dbReference>
<dbReference type="Gene3D" id="2.60.120.20">
    <property type="match status" value="1"/>
</dbReference>
<dbReference type="InterPro" id="IPR048794">
    <property type="entry name" value="SP2_C"/>
</dbReference>
<dbReference type="InterPro" id="IPR048802">
    <property type="entry name" value="SP2_M"/>
</dbReference>
<dbReference type="InterPro" id="IPR004261">
    <property type="entry name" value="SP2_N"/>
</dbReference>
<dbReference type="InterPro" id="IPR029053">
    <property type="entry name" value="Viral_coat"/>
</dbReference>
<dbReference type="Pfam" id="PF03014">
    <property type="entry name" value="SP2"/>
    <property type="match status" value="1"/>
</dbReference>
<dbReference type="Pfam" id="PF20752">
    <property type="entry name" value="SP2_C"/>
    <property type="match status" value="1"/>
</dbReference>
<dbReference type="Pfam" id="PF20751">
    <property type="entry name" value="SP2_M"/>
    <property type="match status" value="1"/>
</dbReference>
<dbReference type="SUPFAM" id="SSF88633">
    <property type="entry name" value="Positive stranded ssRNA viruses"/>
    <property type="match status" value="1"/>
</dbReference>
<keyword id="KW-0002">3D-structure</keyword>
<keyword id="KW-0024">Alternative initiation</keyword>
<keyword id="KW-0167">Capsid protein</keyword>
<keyword id="KW-0325">Glycoprotein</keyword>
<keyword id="KW-1035">Host cytoplasm</keyword>
<keyword id="KW-1038">Host endoplasmic reticulum</keyword>
<keyword id="KW-1040">Host Golgi apparatus</keyword>
<keyword id="KW-1048">Host nucleus</keyword>
<keyword id="KW-0694">RNA-binding</keyword>
<keyword id="KW-0964">Secreted</keyword>
<keyword id="KW-0732">Signal</keyword>
<keyword id="KW-1140">T=1 icosahedral capsid protein</keyword>
<keyword id="KW-0946">Virion</keyword>
<protein>
    <recommendedName>
        <fullName>Pro-secreted protein ORF2</fullName>
    </recommendedName>
    <alternativeName>
        <fullName>Protein ORF2</fullName>
        <shortName>pORF2</shortName>
    </alternativeName>
    <component>
        <recommendedName>
            <fullName>Secreted protein ORF2</fullName>
            <shortName>ORF2s</shortName>
        </recommendedName>
    </component>
</protein>
<evidence type="ECO:0000250" key="1">
    <source>
        <dbReference type="UniProtKB" id="P29326"/>
    </source>
</evidence>
<evidence type="ECO:0000250" key="2">
    <source>
        <dbReference type="UniProtKB" id="P33426"/>
    </source>
</evidence>
<evidence type="ECO:0000250" key="3">
    <source>
        <dbReference type="UniProtKB" id="Q68985"/>
    </source>
</evidence>
<evidence type="ECO:0000250" key="4">
    <source>
        <dbReference type="UniProtKB" id="Q81871"/>
    </source>
</evidence>
<evidence type="ECO:0000255" key="5"/>
<evidence type="ECO:0000256" key="6">
    <source>
        <dbReference type="SAM" id="MobiDB-lite"/>
    </source>
</evidence>
<evidence type="ECO:0000269" key="7">
    <source>
    </source>
</evidence>
<evidence type="ECO:0000305" key="8"/>
<evidence type="ECO:0000312" key="9">
    <source>
        <dbReference type="EMBL" id="AAZ30922.1"/>
    </source>
</evidence>
<evidence type="ECO:0007744" key="10">
    <source>
        <dbReference type="PDB" id="2ZTN"/>
    </source>
</evidence>
<comment type="function">
    <molecule>Isoform Secreted protein ORF2</molecule>
    <text evidence="7">Plays a role in the inhibition of host antibody-mediated neutralization without blocking viral cell entry.</text>
</comment>
<comment type="function">
    <molecule>Isoform Capsid protein</molecule>
    <text evidence="1 2 4">Forms an icosahedral capsid with a T=1 symmetry and a 34 nm diameter. The capsid is composed of 60 copies linked to each other. Binds to the 5' end of the genomic RNA to mediate genome encapsidation (By similarity). Binds to heparin surface proteoglycans (HSPGs) to mediate viral entry. Additionally, the interactions with host ASGR1 and ASGR2 facilitate viral infection of hepatocytes (By similarity). Inhibits IFN production by blocking host TBK1-induced IRF3 phosphorylation (By similarity). The nuclear form probably modulates host gene expression (By similarity).</text>
</comment>
<comment type="subunit">
    <molecule>Isoform Secreted protein ORF2</molecule>
    <text evidence="7">Homodimer.</text>
</comment>
<comment type="subunit">
    <molecule>Isoform Capsid protein</molecule>
    <text evidence="3 4">Self-assembles to form the capsid. The capsid is dominated by dimers that define the 30 morphological units. Interacts with phosphorylated protein ORF3 (By similarity). Interacts with host TMEM134. Interacts with host ASGR1 and ASGR2; these interactions facilitate infection of host hepatocytes (By similarity).</text>
</comment>
<comment type="subcellular location">
    <molecule>Isoform Secreted protein ORF2</molecule>
    <subcellularLocation>
        <location evidence="7">Secreted</location>
    </subcellularLocation>
    <text evidence="3 7">Cotranslationally translocated into the ER (By similarity). Translation from the first AUG produces a full-length protein with a signal peptide that can direct the protein into the secretory pathway (PubMed:29669922).</text>
</comment>
<comment type="subcellular location">
    <molecule>Isoform Capsid protein</molecule>
    <subcellularLocation>
        <location evidence="4">Virion</location>
    </subcellularLocation>
    <subcellularLocation>
        <location evidence="7">Host cytoplasm</location>
    </subcellularLocation>
    <subcellularLocation>
        <location evidence="4">Host endoplasmic reticulum</location>
    </subcellularLocation>
    <subcellularLocation>
        <location evidence="4">Host Golgi apparatus</location>
    </subcellularLocation>
    <subcellularLocation>
        <location evidence="3">Host cell surface</location>
    </subcellularLocation>
    <subcellularLocation>
        <location evidence="4">Host nucleus</location>
    </subcellularLocation>
    <text evidence="2 4 7">Translation from the internal AUG codon disrupts the signal sequence, producing a cytoplasmic protein that is responsible for virion assembly (PubMed:29669922). Shuttles between cytoplasm and nucleus (By similarity). This isoform is found in quasi-enveloped virions (By similarity).</text>
</comment>
<comment type="alternative products">
    <event type="alternative initiation"/>
    <isoform>
        <id>Q9YLQ9-1</id>
        <name>Secreted protein ORF2</name>
        <name>ORF2s</name>
        <name>ORF2g</name>
        <sequence type="displayed"/>
    </isoform>
    <isoform>
        <id>Q9YLQ9-2</id>
        <name>Capsid protein</name>
        <name>ORF2c</name>
        <name>ORF2i</name>
        <sequence type="described" ref="VSP_061726"/>
    </isoform>
</comment>
<comment type="domain">
    <text evidence="2">The Arginine-Rich Motif (ARM) acts as a nuclear localization signal that drives the nuclear translocation of isoform capsid protein. This motif has also been linked to the inhibition of host IRF3 phosphorylation.</text>
</comment>
<comment type="PTM">
    <molecule>Pro-secreted protein ORF2</molecule>
    <text evidence="2">Cleaved by host protease in the N-terminus.</text>
</comment>
<comment type="PTM">
    <molecule>Isoform Secreted protein ORF2</molecule>
    <text evidence="7">N-glycosylated.</text>
</comment>
<comment type="PTM">
    <molecule>Isoform Capsid protein</molecule>
    <text evidence="4">Not N-glycosylated. The C-terminus of the capsid protein ORF2 is truncated in non-enveloped virions shedded in feces, probably due to host proteases.</text>
</comment>
<comment type="miscellaneous">
    <text evidence="4">The viral particles present in feces and bile are non-enveloped, while those in circulating blood and culture supernatants are covered with a cellular membrane (quasi-enveloped).</text>
</comment>
<comment type="similarity">
    <text evidence="8">Belongs to the hepevirus capsid protein family.</text>
</comment>
<organism>
    <name type="scientific">Hepatitis E virus genotype 3 (isolate Human/United States/US2)</name>
    <name type="common">HEV-3</name>
    <dbReference type="NCBI Taxonomy" id="509615"/>
    <lineage>
        <taxon>Viruses</taxon>
        <taxon>Riboviria</taxon>
        <taxon>Orthornavirae</taxon>
        <taxon>Kitrinoviricota</taxon>
        <taxon>Alsuviricetes</taxon>
        <taxon>Hepelivirales</taxon>
        <taxon>Hepeviridae</taxon>
        <taxon>Orthohepevirinae</taxon>
        <taxon>Paslahepevirus</taxon>
        <taxon>Hepatitis E virus</taxon>
    </lineage>
</organism>
<feature type="signal peptide" evidence="5">
    <location>
        <begin position="1"/>
        <end position="23"/>
    </location>
</feature>
<feature type="chain" id="PRO_0000334535" description="Pro-secreted protein ORF2">
    <location>
        <begin position="24"/>
        <end position="660"/>
    </location>
</feature>
<feature type="chain" id="PRO_0000456934" description="Secreted protein ORF2" evidence="2">
    <location>
        <begin position="34"/>
        <end position="660"/>
    </location>
</feature>
<feature type="region of interest" description="Disordered" evidence="6">
    <location>
        <begin position="19"/>
        <end position="43"/>
    </location>
</feature>
<feature type="region of interest" description="Disordered" evidence="6">
    <location>
        <begin position="64"/>
        <end position="125"/>
    </location>
</feature>
<feature type="region of interest" description="particle formation" evidence="1">
    <location>
        <begin position="368"/>
        <end position="394"/>
    </location>
</feature>
<feature type="region of interest" description="Oligomerization" evidence="1">
    <location>
        <begin position="585"/>
        <end position="610"/>
    </location>
</feature>
<feature type="short sequence motif" description="Nuclear localization signal" evidence="2">
    <location>
        <begin position="28"/>
        <end position="33"/>
    </location>
</feature>
<feature type="compositionally biased region" description="Low complexity" evidence="6">
    <location>
        <begin position="93"/>
        <end position="124"/>
    </location>
</feature>
<feature type="site" description="Cleavage" evidence="2">
    <location>
        <begin position="33"/>
        <end position="34"/>
    </location>
</feature>
<feature type="site" description="Possible cleavage" evidence="4">
    <location>
        <begin position="578"/>
        <end position="579"/>
    </location>
</feature>
<feature type="site" description="Possible cleavage" evidence="4">
    <location>
        <begin position="601"/>
        <end position="602"/>
    </location>
</feature>
<feature type="glycosylation site" description="N-linked (GlcNAc...) asparagine; by host" evidence="3">
    <location>
        <position position="137"/>
    </location>
</feature>
<feature type="glycosylation site" description="N-linked (GlcNAc...) asparagine; by host" evidence="3">
    <location>
        <position position="310"/>
    </location>
</feature>
<feature type="glycosylation site" description="N-linked (GlcNAc...) asparagine; by host" evidence="3">
    <location>
        <position position="562"/>
    </location>
</feature>
<feature type="splice variant" id="VSP_061726" description="In isoform Capsid protein.">
    <location>
        <begin position="1"/>
        <end position="15"/>
    </location>
</feature>
<feature type="sequence variant" description="In strain: 2712." evidence="8">
    <original>L</original>
    <variation>F</variation>
    <location>
        <position position="13"/>
    </location>
</feature>
<feature type="sequence variant" description="In strain: 2712." evidence="8">
    <original>A</original>
    <variation>T</variation>
    <location>
        <position position="103"/>
    </location>
</feature>
<feature type="sequence variant" description="In strain: 2712." evidence="8">
    <original>V</original>
    <variation>T</variation>
    <location>
        <position position="113"/>
    </location>
</feature>
<feature type="sequence variant" description="In strain: 2712." evidence="8">
    <original>A</original>
    <variation>T</variation>
    <location>
        <position position="356"/>
    </location>
</feature>
<feature type="sequence variant" description="In strain: 2712." evidence="8">
    <original>L</original>
    <variation>F</variation>
    <location>
        <position position="500"/>
    </location>
</feature>
<feature type="sequence variant" description="In strain: 2712." evidence="8">
    <original>G</original>
    <variation>S</variation>
    <location>
        <position position="551"/>
    </location>
</feature>
<feature type="sequence variant" description="In strain: 2712." evidence="8">
    <original>V</original>
    <variation>A</variation>
    <location>
        <position position="609"/>
    </location>
</feature>
<feature type="sequence variant" description="In strain: 2712." evidence="8">
    <original>I</original>
    <variation>V</variation>
    <location>
        <position position="614"/>
    </location>
</feature>
<feature type="sequence variant" description="In strain: 2712." evidence="8">
    <original>M</original>
    <variation>V</variation>
    <location>
        <position position="652"/>
    </location>
</feature>
<proteinExistence type="evidence at protein level"/>
<organismHost>
    <name type="scientific">Bandicota bengalensis</name>
    <name type="common">lesser bandicoot rat</name>
    <dbReference type="NCBI Taxonomy" id="69079"/>
</organismHost>
<organismHost>
    <name type="scientific">Callithrix</name>
    <dbReference type="NCBI Taxonomy" id="9481"/>
</organismHost>
<organismHost>
    <name type="scientific">Cercopithecus hamlyni</name>
    <name type="common">Owl-faced monkey</name>
    <name type="synonym">Hamlyn's monkey</name>
    <dbReference type="NCBI Taxonomy" id="9536"/>
</organismHost>
<organismHost>
    <name type="scientific">Chlorocebus aethiops</name>
    <name type="common">Green monkey</name>
    <name type="synonym">Cercopithecus aethiops</name>
    <dbReference type="NCBI Taxonomy" id="9534"/>
</organismHost>
<organismHost>
    <name type="scientific">Homo sapiens</name>
    <name type="common">Human</name>
    <dbReference type="NCBI Taxonomy" id="9606"/>
</organismHost>
<organismHost>
    <name type="scientific">Macaca</name>
    <name type="common">macaques</name>
    <dbReference type="NCBI Taxonomy" id="9539"/>
</organismHost>
<organismHost>
    <name type="scientific">Mus musculus</name>
    <name type="common">Mouse</name>
    <dbReference type="NCBI Taxonomy" id="10090"/>
</organismHost>
<organismHost>
    <name type="scientific">Pan troglodytes</name>
    <name type="common">Chimpanzee</name>
    <dbReference type="NCBI Taxonomy" id="9598"/>
</organismHost>
<organismHost>
    <name type="scientific">Saimiri</name>
    <name type="common">squirrel monkeys</name>
    <dbReference type="NCBI Taxonomy" id="9520"/>
</organismHost>
<organismHost>
    <name type="scientific">Sus scrofa</name>
    <name type="common">Pig</name>
    <dbReference type="NCBI Taxonomy" id="9823"/>
</organismHost>
<accession>Q9YLQ9</accession>
<accession>Q1AHU7</accession>
<reference key="1">
    <citation type="journal article" date="1999" name="J. Gen. Virol.">
        <title>A hepatitis E virus variant from the United States: molecular characterization and transmission in cynomolgus macaques.</title>
        <authorList>
            <person name="Erker J.C."/>
            <person name="Desai S.M."/>
            <person name="Schlauder G.G."/>
            <person name="Dawson G.J."/>
            <person name="Mushahwar I.K."/>
        </authorList>
    </citation>
    <scope>NUCLEOTIDE SEQUENCE [GENOMIC DNA]</scope>
</reference>
<reference key="2">
    <citation type="submission" date="2005-05" db="EMBL/GenBank/DDBJ databases">
        <authorList>
            <person name="Tiancheng L."/>
            <person name="Naokazu T."/>
            <person name="Tatsuo M."/>
        </authorList>
    </citation>
    <scope>NUCLEOTIDE SEQUENCE [GENOMIC DNA]</scope>
    <source>
        <strain evidence="9">2712</strain>
    </source>
</reference>
<reference key="3">
    <citation type="journal article" date="2018" name="Proc. Natl. Acad. Sci. U.S.A.">
        <title>Origin, antigenicity, and function of a secreted form of ORF2 in hepatitis E virus infection.</title>
        <authorList>
            <person name="Yin X."/>
            <person name="Ying D."/>
            <person name="Lhomme S."/>
            <person name="Tang Z."/>
            <person name="Walker C.M."/>
            <person name="Xia N."/>
            <person name="Zheng Z."/>
            <person name="Feng Z."/>
        </authorList>
    </citation>
    <scope>FUNCTION (ISOFORM SECRETED PROTEIN ORF2)</scope>
    <scope>SUBUNIT (ISOFORM SECRETED PROTEIN ORF2)</scope>
    <scope>GLYCOSYLATION AT ASN-137; ASN-310 AND ASN-562 (ISOFORM SECRETED PROTEIN ORF2)</scope>
    <scope>SUBCELLULAR LOCATION (ISOFORM SECRETED PROTEIN ORF2)</scope>
    <scope>SUBCELLULAR LOCATION (ISOFORM CAPSID PROTEIN ORF2)</scope>
    <scope>ALTERNATIVE INITIATION</scope>
    <source>
        <strain>Kernow C1</strain>
    </source>
</reference>
<reference evidence="10" key="4">
    <citation type="journal article" date="2009" name="Proc. Natl. Acad. Sci. U.S.A.">
        <title>Biological and immunological characteristics of hepatitis E virus-like particles based on the crystal structure.</title>
        <authorList>
            <person name="Yamashita T."/>
            <person name="Mori Y."/>
            <person name="Miyazaki N."/>
            <person name="Cheng R.H."/>
            <person name="Yoshimura M."/>
            <person name="Unno H."/>
            <person name="Shima R."/>
            <person name="Moriishi K."/>
            <person name="Tsukihara T."/>
            <person name="Li T.C."/>
            <person name="Takeda N."/>
            <person name="Miyamura T."/>
            <person name="Matsuura Y."/>
        </authorList>
    </citation>
    <scope>X-RAY CRYSTALLOGRAPHY (3.56 ANGSTROMS) OF 129-606</scope>
    <scope>VARIANTS PHE-13; THR-103; THR-113; THR-356; PHE-500; SER-551; ALA-609; VAL-614 AND VAL-652</scope>
    <source>
        <strain>2712</strain>
    </source>
</reference>
<name>CAPSD_HEVUS</name>
<gene>
    <name type="ORF">ORF2</name>
</gene>